<accession>B0RXD3</accession>
<name>KATG_XANCB</name>
<evidence type="ECO:0000255" key="1">
    <source>
        <dbReference type="HAMAP-Rule" id="MF_01961"/>
    </source>
</evidence>
<reference key="1">
    <citation type="journal article" date="2008" name="J. Biotechnol.">
        <title>The genome of Xanthomonas campestris pv. campestris B100 and its use for the reconstruction of metabolic pathways involved in xanthan biosynthesis.</title>
        <authorList>
            <person name="Vorhoelter F.-J."/>
            <person name="Schneiker S."/>
            <person name="Goesmann A."/>
            <person name="Krause L."/>
            <person name="Bekel T."/>
            <person name="Kaiser O."/>
            <person name="Linke B."/>
            <person name="Patschkowski T."/>
            <person name="Rueckert C."/>
            <person name="Schmid J."/>
            <person name="Sidhu V.K."/>
            <person name="Sieber V."/>
            <person name="Tauch A."/>
            <person name="Watt S.A."/>
            <person name="Weisshaar B."/>
            <person name="Becker A."/>
            <person name="Niehaus K."/>
            <person name="Puehler A."/>
        </authorList>
    </citation>
    <scope>NUCLEOTIDE SEQUENCE [LARGE SCALE GENOMIC DNA]</scope>
    <source>
        <strain>B100</strain>
    </source>
</reference>
<dbReference type="EC" id="1.11.1.21" evidence="1"/>
<dbReference type="EMBL" id="AM920689">
    <property type="protein sequence ID" value="CAP52499.1"/>
    <property type="molecule type" value="Genomic_DNA"/>
</dbReference>
<dbReference type="SMR" id="B0RXD3"/>
<dbReference type="KEGG" id="xca:xcc-b100_3134"/>
<dbReference type="HOGENOM" id="CLU_025424_2_0_6"/>
<dbReference type="Proteomes" id="UP000001188">
    <property type="component" value="Chromosome"/>
</dbReference>
<dbReference type="GO" id="GO:0005829">
    <property type="term" value="C:cytosol"/>
    <property type="evidence" value="ECO:0007669"/>
    <property type="project" value="TreeGrafter"/>
</dbReference>
<dbReference type="GO" id="GO:0004096">
    <property type="term" value="F:catalase activity"/>
    <property type="evidence" value="ECO:0007669"/>
    <property type="project" value="UniProtKB-UniRule"/>
</dbReference>
<dbReference type="GO" id="GO:0020037">
    <property type="term" value="F:heme binding"/>
    <property type="evidence" value="ECO:0007669"/>
    <property type="project" value="InterPro"/>
</dbReference>
<dbReference type="GO" id="GO:0046872">
    <property type="term" value="F:metal ion binding"/>
    <property type="evidence" value="ECO:0007669"/>
    <property type="project" value="UniProtKB-KW"/>
</dbReference>
<dbReference type="GO" id="GO:0070301">
    <property type="term" value="P:cellular response to hydrogen peroxide"/>
    <property type="evidence" value="ECO:0007669"/>
    <property type="project" value="TreeGrafter"/>
</dbReference>
<dbReference type="GO" id="GO:0042744">
    <property type="term" value="P:hydrogen peroxide catabolic process"/>
    <property type="evidence" value="ECO:0007669"/>
    <property type="project" value="UniProtKB-KW"/>
</dbReference>
<dbReference type="CDD" id="cd00649">
    <property type="entry name" value="catalase_peroxidase_1"/>
    <property type="match status" value="1"/>
</dbReference>
<dbReference type="CDD" id="cd08200">
    <property type="entry name" value="catalase_peroxidase_2"/>
    <property type="match status" value="1"/>
</dbReference>
<dbReference type="FunFam" id="1.10.420.10:FF:000002">
    <property type="entry name" value="Catalase-peroxidase"/>
    <property type="match status" value="1"/>
</dbReference>
<dbReference type="FunFam" id="1.10.420.10:FF:000004">
    <property type="entry name" value="Catalase-peroxidase"/>
    <property type="match status" value="1"/>
</dbReference>
<dbReference type="FunFam" id="1.10.520.10:FF:000002">
    <property type="entry name" value="Catalase-peroxidase"/>
    <property type="match status" value="1"/>
</dbReference>
<dbReference type="Gene3D" id="1.10.520.10">
    <property type="match status" value="2"/>
</dbReference>
<dbReference type="Gene3D" id="1.10.420.10">
    <property type="entry name" value="Peroxidase, domain 2"/>
    <property type="match status" value="2"/>
</dbReference>
<dbReference type="HAMAP" id="MF_01961">
    <property type="entry name" value="Catal_peroxid"/>
    <property type="match status" value="1"/>
</dbReference>
<dbReference type="InterPro" id="IPR000763">
    <property type="entry name" value="Catalase_peroxidase"/>
</dbReference>
<dbReference type="InterPro" id="IPR002016">
    <property type="entry name" value="Haem_peroxidase"/>
</dbReference>
<dbReference type="InterPro" id="IPR010255">
    <property type="entry name" value="Haem_peroxidase_sf"/>
</dbReference>
<dbReference type="InterPro" id="IPR019794">
    <property type="entry name" value="Peroxidases_AS"/>
</dbReference>
<dbReference type="InterPro" id="IPR019793">
    <property type="entry name" value="Peroxidases_heam-ligand_BS"/>
</dbReference>
<dbReference type="NCBIfam" id="TIGR00198">
    <property type="entry name" value="cat_per_HPI"/>
    <property type="match status" value="1"/>
</dbReference>
<dbReference type="NCBIfam" id="NF011635">
    <property type="entry name" value="PRK15061.1"/>
    <property type="match status" value="1"/>
</dbReference>
<dbReference type="PANTHER" id="PTHR30555:SF0">
    <property type="entry name" value="CATALASE-PEROXIDASE"/>
    <property type="match status" value="1"/>
</dbReference>
<dbReference type="PANTHER" id="PTHR30555">
    <property type="entry name" value="HYDROPEROXIDASE I, BIFUNCTIONAL CATALASE-PEROXIDASE"/>
    <property type="match status" value="1"/>
</dbReference>
<dbReference type="Pfam" id="PF00141">
    <property type="entry name" value="peroxidase"/>
    <property type="match status" value="2"/>
</dbReference>
<dbReference type="PRINTS" id="PR00460">
    <property type="entry name" value="BPEROXIDASE"/>
</dbReference>
<dbReference type="PRINTS" id="PR00458">
    <property type="entry name" value="PEROXIDASE"/>
</dbReference>
<dbReference type="SUPFAM" id="SSF48113">
    <property type="entry name" value="Heme-dependent peroxidases"/>
    <property type="match status" value="2"/>
</dbReference>
<dbReference type="PROSITE" id="PS00435">
    <property type="entry name" value="PEROXIDASE_1"/>
    <property type="match status" value="1"/>
</dbReference>
<dbReference type="PROSITE" id="PS00436">
    <property type="entry name" value="PEROXIDASE_2"/>
    <property type="match status" value="1"/>
</dbReference>
<dbReference type="PROSITE" id="PS50873">
    <property type="entry name" value="PEROXIDASE_4"/>
    <property type="match status" value="1"/>
</dbReference>
<feature type="chain" id="PRO_0000354957" description="Catalase-peroxidase">
    <location>
        <begin position="1"/>
        <end position="748"/>
    </location>
</feature>
<feature type="active site" description="Proton acceptor" evidence="1">
    <location>
        <position position="93"/>
    </location>
</feature>
<feature type="binding site" description="axial binding residue" evidence="1">
    <location>
        <position position="279"/>
    </location>
    <ligand>
        <name>heme b</name>
        <dbReference type="ChEBI" id="CHEBI:60344"/>
    </ligand>
    <ligandPart>
        <name>Fe</name>
        <dbReference type="ChEBI" id="CHEBI:18248"/>
    </ligandPart>
</feature>
<feature type="site" description="Transition state stabilizer" evidence="1">
    <location>
        <position position="89"/>
    </location>
</feature>
<feature type="cross-link" description="Tryptophyl-tyrosyl-methioninium (Trp-Tyr) (with M-264)" evidence="1">
    <location>
        <begin position="92"/>
        <end position="238"/>
    </location>
</feature>
<feature type="cross-link" description="Tryptophyl-tyrosyl-methioninium (Tyr-Met) (with W-92)" evidence="1">
    <location>
        <begin position="238"/>
        <end position="264"/>
    </location>
</feature>
<protein>
    <recommendedName>
        <fullName evidence="1">Catalase-peroxidase</fullName>
        <shortName evidence="1">CP</shortName>
        <ecNumber evidence="1">1.11.1.21</ecNumber>
    </recommendedName>
    <alternativeName>
        <fullName evidence="1">Peroxidase/catalase</fullName>
    </alternativeName>
</protein>
<gene>
    <name evidence="1" type="primary">katG</name>
    <name type="ordered locus">xcc-b100_3134</name>
</gene>
<sequence>MTTEAKCPFNHSVVGAGTTNRDWWPKQLRVDLLNQHSARSNPLAASFNYAEAFKRLDLQTLKQELRALMTDSQDWWPADFGHYGPLFVRMAWHSAGTYRTGDGRGGGGRGQQRFAPLNSWPDNVSLDKARRLLWPIKQKYGQAISWADLMILTGNVALESMGFKTFGFAGGREDTWEPDQDLYWGRETKWLGGDDRYAHGSPGVDQAHGVLVKDDDSEVQHTRDLENPLAAVQMGLIYVNPEGPDGNPDPLLAAKDIRDTFGRMAMNDEETVALIAGGHTFGKTHGAADAAHVAAEPEASDLESQGLGWHNSFGSGKGGDTITSGLEVTWTTTPAQWSNDFFDHLFGFEWELSKSPAGAHQWVAKNAQAIIPDAHDASKKRLPTMLTTDLALRIDPAYEAISRRFHANPDQFADAFARAWFKLTHRDMGPRARYLGADVPAEELLWQDPIPALNHALIDAQDAAALKQTVLSSGLSVAQLVATAWASASSFRGSDKRGGANGARIRLAPQKDWASNEPAQLAQVLATLERIQADFNARQSGGKQISLADLIVLGGNAAVEQAAHAAGHAVTVPFAPGRMDASQAQTDVESFAVLEPVADGFRNYAKARYAVSAEALLIDKAQLLTLTAPEMTVLVGGLRVLGANTGQSHNGVFTTRPGVLSNDFFANLLDMRTEWKATSETKETYEGRDRATGEHKWTGTRVDLVFGSNSILRAVAEVYASADAQEKFVQDFVAAWTKVMQLDRFDLA</sequence>
<keyword id="KW-0349">Heme</keyword>
<keyword id="KW-0376">Hydrogen peroxide</keyword>
<keyword id="KW-0408">Iron</keyword>
<keyword id="KW-0479">Metal-binding</keyword>
<keyword id="KW-0560">Oxidoreductase</keyword>
<keyword id="KW-0575">Peroxidase</keyword>
<comment type="function">
    <text evidence="1">Bifunctional enzyme with both catalase and broad-spectrum peroxidase activity.</text>
</comment>
<comment type="catalytic activity">
    <reaction evidence="1">
        <text>H2O2 + AH2 = A + 2 H2O</text>
        <dbReference type="Rhea" id="RHEA:30275"/>
        <dbReference type="ChEBI" id="CHEBI:13193"/>
        <dbReference type="ChEBI" id="CHEBI:15377"/>
        <dbReference type="ChEBI" id="CHEBI:16240"/>
        <dbReference type="ChEBI" id="CHEBI:17499"/>
        <dbReference type="EC" id="1.11.1.21"/>
    </reaction>
</comment>
<comment type="catalytic activity">
    <reaction evidence="1">
        <text>2 H2O2 = O2 + 2 H2O</text>
        <dbReference type="Rhea" id="RHEA:20309"/>
        <dbReference type="ChEBI" id="CHEBI:15377"/>
        <dbReference type="ChEBI" id="CHEBI:15379"/>
        <dbReference type="ChEBI" id="CHEBI:16240"/>
        <dbReference type="EC" id="1.11.1.21"/>
    </reaction>
</comment>
<comment type="cofactor">
    <cofactor evidence="1">
        <name>heme b</name>
        <dbReference type="ChEBI" id="CHEBI:60344"/>
    </cofactor>
    <text evidence="1">Binds 1 heme b (iron(II)-protoporphyrin IX) group per dimer.</text>
</comment>
<comment type="subunit">
    <text evidence="1">Homodimer or homotetramer.</text>
</comment>
<comment type="PTM">
    <text evidence="1">Formation of the three residue Trp-Tyr-Met cross-link is important for the catalase, but not the peroxidase activity of the enzyme.</text>
</comment>
<comment type="similarity">
    <text evidence="1">Belongs to the peroxidase family. Peroxidase/catalase subfamily.</text>
</comment>
<organism>
    <name type="scientific">Xanthomonas campestris pv. campestris (strain B100)</name>
    <dbReference type="NCBI Taxonomy" id="509169"/>
    <lineage>
        <taxon>Bacteria</taxon>
        <taxon>Pseudomonadati</taxon>
        <taxon>Pseudomonadota</taxon>
        <taxon>Gammaproteobacteria</taxon>
        <taxon>Lysobacterales</taxon>
        <taxon>Lysobacteraceae</taxon>
        <taxon>Xanthomonas</taxon>
    </lineage>
</organism>
<proteinExistence type="inferred from homology"/>